<proteinExistence type="inferred from homology"/>
<accession>Q54MG6</accession>
<evidence type="ECO:0000250" key="1"/>
<evidence type="ECO:0000255" key="2"/>
<evidence type="ECO:0000305" key="3"/>
<organism>
    <name type="scientific">Dictyostelium discoideum</name>
    <name type="common">Social amoeba</name>
    <dbReference type="NCBI Taxonomy" id="44689"/>
    <lineage>
        <taxon>Eukaryota</taxon>
        <taxon>Amoebozoa</taxon>
        <taxon>Evosea</taxon>
        <taxon>Eumycetozoa</taxon>
        <taxon>Dictyostelia</taxon>
        <taxon>Dictyosteliales</taxon>
        <taxon>Dictyosteliaceae</taxon>
        <taxon>Dictyostelium</taxon>
    </lineage>
</organism>
<gene>
    <name type="primary">rpl37</name>
    <name type="ORF">DDB_G0285971</name>
</gene>
<dbReference type="EMBL" id="AAFI02000082">
    <property type="protein sequence ID" value="EAL64520.1"/>
    <property type="molecule type" value="Genomic_DNA"/>
</dbReference>
<dbReference type="RefSeq" id="XP_638024.1">
    <property type="nucleotide sequence ID" value="XM_632932.1"/>
</dbReference>
<dbReference type="SMR" id="Q54MG6"/>
<dbReference type="FunCoup" id="Q54MG6">
    <property type="interactions" value="239"/>
</dbReference>
<dbReference type="STRING" id="44689.Q54MG6"/>
<dbReference type="PaxDb" id="44689-DDB0267025"/>
<dbReference type="EnsemblProtists" id="EAL64520">
    <property type="protein sequence ID" value="EAL64520"/>
    <property type="gene ID" value="DDB_G0285971"/>
</dbReference>
<dbReference type="GeneID" id="8625375"/>
<dbReference type="KEGG" id="ddi:DDB_G0285971"/>
<dbReference type="dictyBase" id="DDB_G0285971">
    <property type="gene designation" value="rpl37"/>
</dbReference>
<dbReference type="VEuPathDB" id="AmoebaDB:DDB_G0285971"/>
<dbReference type="eggNOG" id="KOG3475">
    <property type="taxonomic scope" value="Eukaryota"/>
</dbReference>
<dbReference type="HOGENOM" id="CLU_150908_0_0_1"/>
<dbReference type="InParanoid" id="Q54MG6"/>
<dbReference type="OMA" id="RMAYLKH"/>
<dbReference type="PhylomeDB" id="Q54MG6"/>
<dbReference type="Reactome" id="R-DDI-156827">
    <property type="pathway name" value="L13a-mediated translational silencing of Ceruloplasmin expression"/>
</dbReference>
<dbReference type="Reactome" id="R-DDI-1799339">
    <property type="pathway name" value="SRP-dependent cotranslational protein targeting to membrane"/>
</dbReference>
<dbReference type="Reactome" id="R-DDI-72689">
    <property type="pathway name" value="Formation of a pool of free 40S subunits"/>
</dbReference>
<dbReference type="Reactome" id="R-DDI-72706">
    <property type="pathway name" value="GTP hydrolysis and joining of the 60S ribosomal subunit"/>
</dbReference>
<dbReference type="Reactome" id="R-DDI-975956">
    <property type="pathway name" value="Nonsense Mediated Decay (NMD) independent of the Exon Junction Complex (EJC)"/>
</dbReference>
<dbReference type="Reactome" id="R-DDI-975957">
    <property type="pathway name" value="Nonsense Mediated Decay (NMD) enhanced by the Exon Junction Complex (EJC)"/>
</dbReference>
<dbReference type="PRO" id="PR:Q54MG6"/>
<dbReference type="Proteomes" id="UP000002195">
    <property type="component" value="Chromosome 4"/>
</dbReference>
<dbReference type="GO" id="GO:0022625">
    <property type="term" value="C:cytosolic large ribosomal subunit"/>
    <property type="evidence" value="ECO:0000318"/>
    <property type="project" value="GO_Central"/>
</dbReference>
<dbReference type="GO" id="GO:0003723">
    <property type="term" value="F:RNA binding"/>
    <property type="evidence" value="ECO:0000318"/>
    <property type="project" value="GO_Central"/>
</dbReference>
<dbReference type="GO" id="GO:0019843">
    <property type="term" value="F:rRNA binding"/>
    <property type="evidence" value="ECO:0007669"/>
    <property type="project" value="UniProtKB-KW"/>
</dbReference>
<dbReference type="GO" id="GO:0003735">
    <property type="term" value="F:structural constituent of ribosome"/>
    <property type="evidence" value="ECO:0007669"/>
    <property type="project" value="InterPro"/>
</dbReference>
<dbReference type="GO" id="GO:0008270">
    <property type="term" value="F:zinc ion binding"/>
    <property type="evidence" value="ECO:0007669"/>
    <property type="project" value="UniProtKB-KW"/>
</dbReference>
<dbReference type="GO" id="GO:0006412">
    <property type="term" value="P:translation"/>
    <property type="evidence" value="ECO:0007669"/>
    <property type="project" value="InterPro"/>
</dbReference>
<dbReference type="FunFam" id="2.20.25.30:FF:000001">
    <property type="entry name" value="Ribosomal protein L37"/>
    <property type="match status" value="1"/>
</dbReference>
<dbReference type="Gene3D" id="2.20.25.30">
    <property type="match status" value="1"/>
</dbReference>
<dbReference type="HAMAP" id="MF_00547">
    <property type="entry name" value="Ribosomal_eL37"/>
    <property type="match status" value="1"/>
</dbReference>
<dbReference type="InterPro" id="IPR001569">
    <property type="entry name" value="Ribosomal_eL37"/>
</dbReference>
<dbReference type="InterPro" id="IPR011331">
    <property type="entry name" value="Ribosomal_eL37/eL43"/>
</dbReference>
<dbReference type="InterPro" id="IPR018267">
    <property type="entry name" value="Ribosomal_eL37_CS"/>
</dbReference>
<dbReference type="InterPro" id="IPR011332">
    <property type="entry name" value="Ribosomal_zn-bd"/>
</dbReference>
<dbReference type="PANTHER" id="PTHR10768">
    <property type="entry name" value="60S RIBOSOMAL PROTEIN L37"/>
    <property type="match status" value="1"/>
</dbReference>
<dbReference type="PANTHER" id="PTHR10768:SF0">
    <property type="entry name" value="RIBOSOMAL PROTEIN L37"/>
    <property type="match status" value="1"/>
</dbReference>
<dbReference type="Pfam" id="PF01907">
    <property type="entry name" value="Ribosomal_L37e"/>
    <property type="match status" value="1"/>
</dbReference>
<dbReference type="SUPFAM" id="SSF57829">
    <property type="entry name" value="Zn-binding ribosomal proteins"/>
    <property type="match status" value="1"/>
</dbReference>
<dbReference type="PROSITE" id="PS01077">
    <property type="entry name" value="RIBOSOMAL_L37E"/>
    <property type="match status" value="1"/>
</dbReference>
<protein>
    <recommendedName>
        <fullName evidence="3">Large ribosomal subunit protein eL37</fullName>
    </recommendedName>
    <alternativeName>
        <fullName>60S ribosomal protein L37</fullName>
    </alternativeName>
</protein>
<comment type="function">
    <text evidence="1">Binds to the 23S rRNA.</text>
</comment>
<comment type="cofactor">
    <cofactor evidence="1">
        <name>Zn(2+)</name>
        <dbReference type="ChEBI" id="CHEBI:29105"/>
    </cofactor>
    <text evidence="1">Binds 1 zinc ion per subunit.</text>
</comment>
<comment type="similarity">
    <text evidence="3">Belongs to the eukaryotic ribosomal protein eL37 family.</text>
</comment>
<sequence length="91" mass="10334">MTKGTFSFGRRHTKSHTLCRRCGKSSFHIQKKTCASCGYPSAKTRSYNWSIKAQRRKTTGTGRTRYLKTVHKRFNSGFKEASLAVKKTAAK</sequence>
<keyword id="KW-0479">Metal-binding</keyword>
<keyword id="KW-1185">Reference proteome</keyword>
<keyword id="KW-0687">Ribonucleoprotein</keyword>
<keyword id="KW-0689">Ribosomal protein</keyword>
<keyword id="KW-0694">RNA-binding</keyword>
<keyword id="KW-0699">rRNA-binding</keyword>
<keyword id="KW-0862">Zinc</keyword>
<keyword id="KW-0863">Zinc-finger</keyword>
<reference key="1">
    <citation type="journal article" date="2005" name="Nature">
        <title>The genome of the social amoeba Dictyostelium discoideum.</title>
        <authorList>
            <person name="Eichinger L."/>
            <person name="Pachebat J.A."/>
            <person name="Gloeckner G."/>
            <person name="Rajandream M.A."/>
            <person name="Sucgang R."/>
            <person name="Berriman M."/>
            <person name="Song J."/>
            <person name="Olsen R."/>
            <person name="Szafranski K."/>
            <person name="Xu Q."/>
            <person name="Tunggal B."/>
            <person name="Kummerfeld S."/>
            <person name="Madera M."/>
            <person name="Konfortov B.A."/>
            <person name="Rivero F."/>
            <person name="Bankier A.T."/>
            <person name="Lehmann R."/>
            <person name="Hamlin N."/>
            <person name="Davies R."/>
            <person name="Gaudet P."/>
            <person name="Fey P."/>
            <person name="Pilcher K."/>
            <person name="Chen G."/>
            <person name="Saunders D."/>
            <person name="Sodergren E.J."/>
            <person name="Davis P."/>
            <person name="Kerhornou A."/>
            <person name="Nie X."/>
            <person name="Hall N."/>
            <person name="Anjard C."/>
            <person name="Hemphill L."/>
            <person name="Bason N."/>
            <person name="Farbrother P."/>
            <person name="Desany B."/>
            <person name="Just E."/>
            <person name="Morio T."/>
            <person name="Rost R."/>
            <person name="Churcher C.M."/>
            <person name="Cooper J."/>
            <person name="Haydock S."/>
            <person name="van Driessche N."/>
            <person name="Cronin A."/>
            <person name="Goodhead I."/>
            <person name="Muzny D.M."/>
            <person name="Mourier T."/>
            <person name="Pain A."/>
            <person name="Lu M."/>
            <person name="Harper D."/>
            <person name="Lindsay R."/>
            <person name="Hauser H."/>
            <person name="James K.D."/>
            <person name="Quiles M."/>
            <person name="Madan Babu M."/>
            <person name="Saito T."/>
            <person name="Buchrieser C."/>
            <person name="Wardroper A."/>
            <person name="Felder M."/>
            <person name="Thangavelu M."/>
            <person name="Johnson D."/>
            <person name="Knights A."/>
            <person name="Loulseged H."/>
            <person name="Mungall K.L."/>
            <person name="Oliver K."/>
            <person name="Price C."/>
            <person name="Quail M.A."/>
            <person name="Urushihara H."/>
            <person name="Hernandez J."/>
            <person name="Rabbinowitsch E."/>
            <person name="Steffen D."/>
            <person name="Sanders M."/>
            <person name="Ma J."/>
            <person name="Kohara Y."/>
            <person name="Sharp S."/>
            <person name="Simmonds M.N."/>
            <person name="Spiegler S."/>
            <person name="Tivey A."/>
            <person name="Sugano S."/>
            <person name="White B."/>
            <person name="Walker D."/>
            <person name="Woodward J.R."/>
            <person name="Winckler T."/>
            <person name="Tanaka Y."/>
            <person name="Shaulsky G."/>
            <person name="Schleicher M."/>
            <person name="Weinstock G.M."/>
            <person name="Rosenthal A."/>
            <person name="Cox E.C."/>
            <person name="Chisholm R.L."/>
            <person name="Gibbs R.A."/>
            <person name="Loomis W.F."/>
            <person name="Platzer M."/>
            <person name="Kay R.R."/>
            <person name="Williams J.G."/>
            <person name="Dear P.H."/>
            <person name="Noegel A.A."/>
            <person name="Barrell B.G."/>
            <person name="Kuspa A."/>
        </authorList>
    </citation>
    <scope>NUCLEOTIDE SEQUENCE [LARGE SCALE GENOMIC DNA]</scope>
    <source>
        <strain>AX4</strain>
    </source>
</reference>
<name>RL37_DICDI</name>
<feature type="chain" id="PRO_0000323433" description="Large ribosomal subunit protein eL37">
    <location>
        <begin position="1"/>
        <end position="91"/>
    </location>
</feature>
<feature type="zinc finger region" description="C4-type" evidence="2">
    <location>
        <begin position="19"/>
        <end position="37"/>
    </location>
</feature>
<feature type="binding site" evidence="1">
    <location>
        <position position="19"/>
    </location>
    <ligand>
        <name>Zn(2+)</name>
        <dbReference type="ChEBI" id="CHEBI:29105"/>
    </ligand>
</feature>
<feature type="binding site" evidence="1">
    <location>
        <position position="22"/>
    </location>
    <ligand>
        <name>Zn(2+)</name>
        <dbReference type="ChEBI" id="CHEBI:29105"/>
    </ligand>
</feature>
<feature type="binding site" evidence="1">
    <location>
        <position position="34"/>
    </location>
    <ligand>
        <name>Zn(2+)</name>
        <dbReference type="ChEBI" id="CHEBI:29105"/>
    </ligand>
</feature>
<feature type="binding site" evidence="1">
    <location>
        <position position="37"/>
    </location>
    <ligand>
        <name>Zn(2+)</name>
        <dbReference type="ChEBI" id="CHEBI:29105"/>
    </ligand>
</feature>